<sequence length="397" mass="44947">MDSVNNLCRHYEEKVRPCIDLIDTLRALGVEQDLALPAIAVIGDQSSGKSSVLEALSGVALPRGSGIVTRCPLVLKLRKLKEGEEWRGKVSYDDIEVELSDPSEVEEAINKGQNFIAGVGLGISDKLISLDVSSPNVPDLTLIDLPGITRVAVGNQPADIGRQIKRLIKTYIQKQETINLVVVPSNVDIATTEALSMAQEVDPEGDRTIEMVQTAFVKILSNDFGDFLNLCCTAKSKIKEIRLNQEKEAENLIRLHFQMEQIVYCQDQVYKETLKTIREKEAEKEKTKALINPATFQNNSQFPQKGLTTTEMTQHLKAYYQECRRNIGRQIPLIIQYFILKTFGEEIEKTMLQLLQDTSKCSWFLEEQSDTREKKKFLKRRLLRLDEARQKLAKFSD</sequence>
<protein>
    <recommendedName>
        <fullName>Protein Mx1</fullName>
    </recommendedName>
</protein>
<accession>Q3UD61</accession>
<proteinExistence type="uncertain"/>
<reference key="1">
    <citation type="journal article" date="2005" name="Science">
        <title>The transcriptional landscape of the mammalian genome.</title>
        <authorList>
            <person name="Carninci P."/>
            <person name="Kasukawa T."/>
            <person name="Katayama S."/>
            <person name="Gough J."/>
            <person name="Frith M.C."/>
            <person name="Maeda N."/>
            <person name="Oyama R."/>
            <person name="Ravasi T."/>
            <person name="Lenhard B."/>
            <person name="Wells C."/>
            <person name="Kodzius R."/>
            <person name="Shimokawa K."/>
            <person name="Bajic V.B."/>
            <person name="Brenner S.E."/>
            <person name="Batalov S."/>
            <person name="Forrest A.R."/>
            <person name="Zavolan M."/>
            <person name="Davis M.J."/>
            <person name="Wilming L.G."/>
            <person name="Aidinis V."/>
            <person name="Allen J.E."/>
            <person name="Ambesi-Impiombato A."/>
            <person name="Apweiler R."/>
            <person name="Aturaliya R.N."/>
            <person name="Bailey T.L."/>
            <person name="Bansal M."/>
            <person name="Baxter L."/>
            <person name="Beisel K.W."/>
            <person name="Bersano T."/>
            <person name="Bono H."/>
            <person name="Chalk A.M."/>
            <person name="Chiu K.P."/>
            <person name="Choudhary V."/>
            <person name="Christoffels A."/>
            <person name="Clutterbuck D.R."/>
            <person name="Crowe M.L."/>
            <person name="Dalla E."/>
            <person name="Dalrymple B.P."/>
            <person name="de Bono B."/>
            <person name="Della Gatta G."/>
            <person name="di Bernardo D."/>
            <person name="Down T."/>
            <person name="Engstrom P."/>
            <person name="Fagiolini M."/>
            <person name="Faulkner G."/>
            <person name="Fletcher C.F."/>
            <person name="Fukushima T."/>
            <person name="Furuno M."/>
            <person name="Futaki S."/>
            <person name="Gariboldi M."/>
            <person name="Georgii-Hemming P."/>
            <person name="Gingeras T.R."/>
            <person name="Gojobori T."/>
            <person name="Green R.E."/>
            <person name="Gustincich S."/>
            <person name="Harbers M."/>
            <person name="Hayashi Y."/>
            <person name="Hensch T.K."/>
            <person name="Hirokawa N."/>
            <person name="Hill D."/>
            <person name="Huminiecki L."/>
            <person name="Iacono M."/>
            <person name="Ikeo K."/>
            <person name="Iwama A."/>
            <person name="Ishikawa T."/>
            <person name="Jakt M."/>
            <person name="Kanapin A."/>
            <person name="Katoh M."/>
            <person name="Kawasawa Y."/>
            <person name="Kelso J."/>
            <person name="Kitamura H."/>
            <person name="Kitano H."/>
            <person name="Kollias G."/>
            <person name="Krishnan S.P."/>
            <person name="Kruger A."/>
            <person name="Kummerfeld S.K."/>
            <person name="Kurochkin I.V."/>
            <person name="Lareau L.F."/>
            <person name="Lazarevic D."/>
            <person name="Lipovich L."/>
            <person name="Liu J."/>
            <person name="Liuni S."/>
            <person name="McWilliam S."/>
            <person name="Madan Babu M."/>
            <person name="Madera M."/>
            <person name="Marchionni L."/>
            <person name="Matsuda H."/>
            <person name="Matsuzawa S."/>
            <person name="Miki H."/>
            <person name="Mignone F."/>
            <person name="Miyake S."/>
            <person name="Morris K."/>
            <person name="Mottagui-Tabar S."/>
            <person name="Mulder N."/>
            <person name="Nakano N."/>
            <person name="Nakauchi H."/>
            <person name="Ng P."/>
            <person name="Nilsson R."/>
            <person name="Nishiguchi S."/>
            <person name="Nishikawa S."/>
            <person name="Nori F."/>
            <person name="Ohara O."/>
            <person name="Okazaki Y."/>
            <person name="Orlando V."/>
            <person name="Pang K.C."/>
            <person name="Pavan W.J."/>
            <person name="Pavesi G."/>
            <person name="Pesole G."/>
            <person name="Petrovsky N."/>
            <person name="Piazza S."/>
            <person name="Reed J."/>
            <person name="Reid J.F."/>
            <person name="Ring B.Z."/>
            <person name="Ringwald M."/>
            <person name="Rost B."/>
            <person name="Ruan Y."/>
            <person name="Salzberg S.L."/>
            <person name="Sandelin A."/>
            <person name="Schneider C."/>
            <person name="Schoenbach C."/>
            <person name="Sekiguchi K."/>
            <person name="Semple C.A."/>
            <person name="Seno S."/>
            <person name="Sessa L."/>
            <person name="Sheng Y."/>
            <person name="Shibata Y."/>
            <person name="Shimada H."/>
            <person name="Shimada K."/>
            <person name="Silva D."/>
            <person name="Sinclair B."/>
            <person name="Sperling S."/>
            <person name="Stupka E."/>
            <person name="Sugiura K."/>
            <person name="Sultana R."/>
            <person name="Takenaka Y."/>
            <person name="Taki K."/>
            <person name="Tammoja K."/>
            <person name="Tan S.L."/>
            <person name="Tang S."/>
            <person name="Taylor M.S."/>
            <person name="Tegner J."/>
            <person name="Teichmann S.A."/>
            <person name="Ueda H.R."/>
            <person name="van Nimwegen E."/>
            <person name="Verardo R."/>
            <person name="Wei C.L."/>
            <person name="Yagi K."/>
            <person name="Yamanishi H."/>
            <person name="Zabarovsky E."/>
            <person name="Zhu S."/>
            <person name="Zimmer A."/>
            <person name="Hide W."/>
            <person name="Bult C."/>
            <person name="Grimmond S.M."/>
            <person name="Teasdale R.D."/>
            <person name="Liu E.T."/>
            <person name="Brusic V."/>
            <person name="Quackenbush J."/>
            <person name="Wahlestedt C."/>
            <person name="Mattick J.S."/>
            <person name="Hume D.A."/>
            <person name="Kai C."/>
            <person name="Sasaki D."/>
            <person name="Tomaru Y."/>
            <person name="Fukuda S."/>
            <person name="Kanamori-Katayama M."/>
            <person name="Suzuki M."/>
            <person name="Aoki J."/>
            <person name="Arakawa T."/>
            <person name="Iida J."/>
            <person name="Imamura K."/>
            <person name="Itoh M."/>
            <person name="Kato T."/>
            <person name="Kawaji H."/>
            <person name="Kawagashira N."/>
            <person name="Kawashima T."/>
            <person name="Kojima M."/>
            <person name="Kondo S."/>
            <person name="Konno H."/>
            <person name="Nakano K."/>
            <person name="Ninomiya N."/>
            <person name="Nishio T."/>
            <person name="Okada M."/>
            <person name="Plessy C."/>
            <person name="Shibata K."/>
            <person name="Shiraki T."/>
            <person name="Suzuki S."/>
            <person name="Tagami M."/>
            <person name="Waki K."/>
            <person name="Watahiki A."/>
            <person name="Okamura-Oho Y."/>
            <person name="Suzuki H."/>
            <person name="Kawai J."/>
            <person name="Hayashizaki Y."/>
        </authorList>
    </citation>
    <scope>NUCLEOTIDE SEQUENCE [LARGE SCALE MRNA]</scope>
    <source>
        <strain>C57BL/6J</strain>
        <tissue>Bone marrow macrophage</tissue>
    </source>
</reference>
<reference key="2">
    <citation type="journal article" date="2009" name="PLoS Biol.">
        <title>Lineage-specific biology revealed by a finished genome assembly of the mouse.</title>
        <authorList>
            <person name="Church D.M."/>
            <person name="Goodstadt L."/>
            <person name="Hillier L.W."/>
            <person name="Zody M.C."/>
            <person name="Goldstein S."/>
            <person name="She X."/>
            <person name="Bult C.J."/>
            <person name="Agarwala R."/>
            <person name="Cherry J.L."/>
            <person name="DiCuccio M."/>
            <person name="Hlavina W."/>
            <person name="Kapustin Y."/>
            <person name="Meric P."/>
            <person name="Maglott D."/>
            <person name="Birtle Z."/>
            <person name="Marques A.C."/>
            <person name="Graves T."/>
            <person name="Zhou S."/>
            <person name="Teague B."/>
            <person name="Potamousis K."/>
            <person name="Churas C."/>
            <person name="Place M."/>
            <person name="Herschleb J."/>
            <person name="Runnheim R."/>
            <person name="Forrest D."/>
            <person name="Amos-Landgraf J."/>
            <person name="Schwartz D.C."/>
            <person name="Cheng Z."/>
            <person name="Lindblad-Toh K."/>
            <person name="Eichler E.E."/>
            <person name="Ponting C.P."/>
        </authorList>
    </citation>
    <scope>NUCLEOTIDE SEQUENCE [LARGE SCALE GENOMIC DNA]</scope>
    <source>
        <strain>C57BL/6J</strain>
    </source>
</reference>
<reference key="3">
    <citation type="journal article" date="1988" name="Mol. Cell. Biol.">
        <title>Influenza virus-susceptible mice carry Mx genes with a large deletion or a nonsense mutation.</title>
        <authorList>
            <person name="Staeheli P."/>
            <person name="Grob R."/>
            <person name="Meier E."/>
            <person name="Sutcliffe J.G."/>
            <person name="Haller O."/>
        </authorList>
    </citation>
    <scope>INTERSTRAIN VARIABILITY IN MX1 GENE SEQUENCE</scope>
</reference>
<keyword id="KW-1185">Reference proteome</keyword>
<gene>
    <name type="primary">Mx1</name>
    <name evidence="4" type="synonym">Mx</name>
</gene>
<evidence type="ECO:0000255" key="1">
    <source>
        <dbReference type="PROSITE-ProRule" id="PRU01055"/>
    </source>
</evidence>
<evidence type="ECO:0000269" key="2">
    <source>
    </source>
</evidence>
<evidence type="ECO:0000269" key="3">
    <source>
    </source>
</evidence>
<evidence type="ECO:0000303" key="4">
    <source>
    </source>
</evidence>
<evidence type="ECO:0000305" key="5"/>
<organism>
    <name type="scientific">Mus musculus</name>
    <name type="common">Mouse</name>
    <dbReference type="NCBI Taxonomy" id="10090"/>
    <lineage>
        <taxon>Eukaryota</taxon>
        <taxon>Metazoa</taxon>
        <taxon>Chordata</taxon>
        <taxon>Craniata</taxon>
        <taxon>Vertebrata</taxon>
        <taxon>Euteleostomi</taxon>
        <taxon>Mammalia</taxon>
        <taxon>Eutheria</taxon>
        <taxon>Euarchontoglires</taxon>
        <taxon>Glires</taxon>
        <taxon>Rodentia</taxon>
        <taxon>Myomorpha</taxon>
        <taxon>Muroidea</taxon>
        <taxon>Muridae</taxon>
        <taxon>Murinae</taxon>
        <taxon>Mus</taxon>
        <taxon>Mus</taxon>
    </lineage>
</organism>
<feature type="chain" id="PRO_0000451089" description="Protein Mx1">
    <location>
        <begin position="1"/>
        <end position="397"/>
    </location>
</feature>
<dbReference type="EMBL" id="AK150023">
    <property type="protein sequence ID" value="BAE29248.1"/>
    <property type="molecule type" value="mRNA"/>
</dbReference>
<dbReference type="EMBL" id="AK150236">
    <property type="protein sequence ID" value="BAE29400.1"/>
    <property type="molecule type" value="mRNA"/>
</dbReference>
<dbReference type="EMBL" id="AC164088">
    <property type="status" value="NOT_ANNOTATED_CDS"/>
    <property type="molecule type" value="Genomic_DNA"/>
</dbReference>
<dbReference type="SMR" id="Q3UD61"/>
<dbReference type="FunCoup" id="Q3UD61">
    <property type="interactions" value="33"/>
</dbReference>
<dbReference type="jPOST" id="Q3UD61"/>
<dbReference type="PaxDb" id="10090-ENSMUSP00000109397"/>
<dbReference type="ProteomicsDB" id="330322"/>
<dbReference type="Ensembl" id="ENSMUST00000113768.8">
    <property type="protein sequence ID" value="ENSMUSP00000109397.2"/>
    <property type="gene ID" value="ENSMUSG00000000386.19"/>
</dbReference>
<dbReference type="UCSC" id="uc008adh.1">
    <property type="organism name" value="mouse"/>
</dbReference>
<dbReference type="AGR" id="MGI:97243"/>
<dbReference type="MGI" id="MGI:97243">
    <property type="gene designation" value="Mx1"/>
</dbReference>
<dbReference type="GeneTree" id="ENSGT00940000155686"/>
<dbReference type="HOGENOM" id="CLU_008964_8_2_1"/>
<dbReference type="InParanoid" id="Q3UD61"/>
<dbReference type="OrthoDB" id="5061070at2759"/>
<dbReference type="PhylomeDB" id="Q3UD61"/>
<dbReference type="TreeFam" id="TF331484"/>
<dbReference type="Proteomes" id="UP000000589">
    <property type="component" value="Chromosome 16"/>
</dbReference>
<dbReference type="Bgee" id="ENSMUSG00000000386">
    <property type="expression patterns" value="Expressed in mucous cell of stomach and 84 other cell types or tissues"/>
</dbReference>
<dbReference type="ExpressionAtlas" id="Q3UD61">
    <property type="expression patterns" value="baseline and differential"/>
</dbReference>
<dbReference type="GO" id="GO:0005634">
    <property type="term" value="C:nucleus"/>
    <property type="evidence" value="ECO:0000314"/>
    <property type="project" value="MGI"/>
</dbReference>
<dbReference type="GO" id="GO:0005525">
    <property type="term" value="F:GTP binding"/>
    <property type="evidence" value="ECO:0000304"/>
    <property type="project" value="MGI"/>
</dbReference>
<dbReference type="GO" id="GO:0003924">
    <property type="term" value="F:GTPase activity"/>
    <property type="evidence" value="ECO:0000304"/>
    <property type="project" value="MGI"/>
</dbReference>
<dbReference type="GO" id="GO:0045087">
    <property type="term" value="P:innate immune response"/>
    <property type="evidence" value="ECO:0000304"/>
    <property type="project" value="MGI"/>
</dbReference>
<dbReference type="GO" id="GO:0009615">
    <property type="term" value="P:response to virus"/>
    <property type="evidence" value="ECO:0000304"/>
    <property type="project" value="MGI"/>
</dbReference>
<dbReference type="CDD" id="cd08771">
    <property type="entry name" value="DLP_1"/>
    <property type="match status" value="1"/>
</dbReference>
<dbReference type="Gene3D" id="1.20.120.1240">
    <property type="entry name" value="Dynamin, middle domain"/>
    <property type="match status" value="1"/>
</dbReference>
<dbReference type="Gene3D" id="3.40.50.300">
    <property type="entry name" value="P-loop containing nucleotide triphosphate hydrolases"/>
    <property type="match status" value="1"/>
</dbReference>
<dbReference type="InterPro" id="IPR022812">
    <property type="entry name" value="Dynamin"/>
</dbReference>
<dbReference type="InterPro" id="IPR001401">
    <property type="entry name" value="Dynamin_GTPase"/>
</dbReference>
<dbReference type="InterPro" id="IPR019762">
    <property type="entry name" value="Dynamin_GTPase_CS"/>
</dbReference>
<dbReference type="InterPro" id="IPR045063">
    <property type="entry name" value="Dynamin_N"/>
</dbReference>
<dbReference type="InterPro" id="IPR000375">
    <property type="entry name" value="Dynamin_stalk"/>
</dbReference>
<dbReference type="InterPro" id="IPR030381">
    <property type="entry name" value="G_DYNAMIN_dom"/>
</dbReference>
<dbReference type="InterPro" id="IPR003130">
    <property type="entry name" value="GED"/>
</dbReference>
<dbReference type="InterPro" id="IPR020850">
    <property type="entry name" value="GED_dom"/>
</dbReference>
<dbReference type="InterPro" id="IPR027417">
    <property type="entry name" value="P-loop_NTPase"/>
</dbReference>
<dbReference type="PANTHER" id="PTHR11566">
    <property type="entry name" value="DYNAMIN"/>
    <property type="match status" value="1"/>
</dbReference>
<dbReference type="PANTHER" id="PTHR11566:SF217">
    <property type="entry name" value="INTERFERON-INDUCED GTP-BINDING PROTEIN MX1"/>
    <property type="match status" value="1"/>
</dbReference>
<dbReference type="Pfam" id="PF01031">
    <property type="entry name" value="Dynamin_M"/>
    <property type="match status" value="1"/>
</dbReference>
<dbReference type="Pfam" id="PF00350">
    <property type="entry name" value="Dynamin_N"/>
    <property type="match status" value="1"/>
</dbReference>
<dbReference type="Pfam" id="PF02212">
    <property type="entry name" value="GED"/>
    <property type="match status" value="1"/>
</dbReference>
<dbReference type="PRINTS" id="PR00195">
    <property type="entry name" value="DYNAMIN"/>
</dbReference>
<dbReference type="SMART" id="SM00053">
    <property type="entry name" value="DYNc"/>
    <property type="match status" value="1"/>
</dbReference>
<dbReference type="SMART" id="SM00302">
    <property type="entry name" value="GED"/>
    <property type="match status" value="1"/>
</dbReference>
<dbReference type="SUPFAM" id="SSF52540">
    <property type="entry name" value="P-loop containing nucleoside triphosphate hydrolases"/>
    <property type="match status" value="1"/>
</dbReference>
<dbReference type="PROSITE" id="PS00410">
    <property type="entry name" value="G_DYNAMIN_1"/>
    <property type="match status" value="1"/>
</dbReference>
<dbReference type="PROSITE" id="PS51718">
    <property type="entry name" value="G_DYNAMIN_2"/>
    <property type="match status" value="1"/>
</dbReference>
<dbReference type="PROSITE" id="PS51388">
    <property type="entry name" value="GED"/>
    <property type="match status" value="1"/>
</dbReference>
<comment type="similarity">
    <text evidence="1">Belongs to the TRAFAC class dynamin-like GTPase superfamily. Dynamin/Fzo/YdjA family.</text>
</comment>
<comment type="caution">
    <text evidence="2 3 5">Could be the product of a pseudogene. The sequence shown in this entry is that of an non-functional Mx1 gene product, as it is encoded by the C57BL/6J reference genome (PubMed:19468303). The expression of this gene, if it occurs, would result in a non-functional gene product. Mx1 gene corruption, by a deletion or a nonsense mutation, is also observed in other inbred strains. The functional Mx1 gene is found in some feral mouse strains. Its product is involved in the innate immunity system (PubMed:2903437).</text>
</comment>
<name>MX1_MOUSE</name>